<proteinExistence type="inferred from homology"/>
<comment type="function">
    <text evidence="1">One of the primary rRNA binding proteins, it binds directly to 16S rRNA where it helps nucleate assembly of the platform of the 30S subunit by binding and bridging several RNA helices of the 16S rRNA.</text>
</comment>
<comment type="function">
    <text evidence="1">Forms an intersubunit bridge (bridge B4) with the 23S rRNA of the 50S subunit in the ribosome.</text>
</comment>
<comment type="subunit">
    <text evidence="1">Part of the 30S ribosomal subunit. Forms a bridge to the 50S subunit in the 70S ribosome, contacting the 23S rRNA.</text>
</comment>
<comment type="similarity">
    <text evidence="1">Belongs to the universal ribosomal protein uS15 family.</text>
</comment>
<feature type="chain" id="PRO_0000255508" description="Small ribosomal subunit protein uS15">
    <location>
        <begin position="1"/>
        <end position="89"/>
    </location>
</feature>
<feature type="region of interest" description="Disordered" evidence="2">
    <location>
        <begin position="1"/>
        <end position="25"/>
    </location>
</feature>
<feature type="compositionally biased region" description="Basic and acidic residues" evidence="2">
    <location>
        <begin position="1"/>
        <end position="21"/>
    </location>
</feature>
<protein>
    <recommendedName>
        <fullName evidence="1">Small ribosomal subunit protein uS15</fullName>
    </recommendedName>
    <alternativeName>
        <fullName evidence="3">30S ribosomal protein S15</fullName>
    </alternativeName>
</protein>
<accession>Q1DAM2</accession>
<name>RS15_MYXXD</name>
<organism>
    <name type="scientific">Myxococcus xanthus (strain DK1622)</name>
    <dbReference type="NCBI Taxonomy" id="246197"/>
    <lineage>
        <taxon>Bacteria</taxon>
        <taxon>Pseudomonadati</taxon>
        <taxon>Myxococcota</taxon>
        <taxon>Myxococcia</taxon>
        <taxon>Myxococcales</taxon>
        <taxon>Cystobacterineae</taxon>
        <taxon>Myxococcaceae</taxon>
        <taxon>Myxococcus</taxon>
    </lineage>
</organism>
<sequence length="89" mass="10463">MSLHQERKSELVSKFRTHESDTGSPEVQVALLSERITMLTEHFKTHKKDHHSRRGLLKLVGQRRRLLDYLKSKDVARYKKLIDGLGIRK</sequence>
<evidence type="ECO:0000255" key="1">
    <source>
        <dbReference type="HAMAP-Rule" id="MF_01343"/>
    </source>
</evidence>
<evidence type="ECO:0000256" key="2">
    <source>
        <dbReference type="SAM" id="MobiDB-lite"/>
    </source>
</evidence>
<evidence type="ECO:0000305" key="3"/>
<gene>
    <name evidence="1" type="primary">rpsO</name>
    <name type="ordered locus">MXAN_2072</name>
</gene>
<dbReference type="EMBL" id="CP000113">
    <property type="protein sequence ID" value="ABF91487.1"/>
    <property type="molecule type" value="Genomic_DNA"/>
</dbReference>
<dbReference type="RefSeq" id="WP_011552156.1">
    <property type="nucleotide sequence ID" value="NC_008095.1"/>
</dbReference>
<dbReference type="SMR" id="Q1DAM2"/>
<dbReference type="STRING" id="246197.MXAN_2072"/>
<dbReference type="EnsemblBacteria" id="ABF91487">
    <property type="protein sequence ID" value="ABF91487"/>
    <property type="gene ID" value="MXAN_2072"/>
</dbReference>
<dbReference type="GeneID" id="41359480"/>
<dbReference type="KEGG" id="mxa:MXAN_2072"/>
<dbReference type="eggNOG" id="COG0184">
    <property type="taxonomic scope" value="Bacteria"/>
</dbReference>
<dbReference type="HOGENOM" id="CLU_148518_0_0_7"/>
<dbReference type="OrthoDB" id="9799262at2"/>
<dbReference type="Proteomes" id="UP000002402">
    <property type="component" value="Chromosome"/>
</dbReference>
<dbReference type="GO" id="GO:0022627">
    <property type="term" value="C:cytosolic small ribosomal subunit"/>
    <property type="evidence" value="ECO:0007669"/>
    <property type="project" value="TreeGrafter"/>
</dbReference>
<dbReference type="GO" id="GO:0019843">
    <property type="term" value="F:rRNA binding"/>
    <property type="evidence" value="ECO:0007669"/>
    <property type="project" value="UniProtKB-UniRule"/>
</dbReference>
<dbReference type="GO" id="GO:0003735">
    <property type="term" value="F:structural constituent of ribosome"/>
    <property type="evidence" value="ECO:0007669"/>
    <property type="project" value="InterPro"/>
</dbReference>
<dbReference type="GO" id="GO:0006412">
    <property type="term" value="P:translation"/>
    <property type="evidence" value="ECO:0007669"/>
    <property type="project" value="UniProtKB-UniRule"/>
</dbReference>
<dbReference type="CDD" id="cd00353">
    <property type="entry name" value="Ribosomal_S15p_S13e"/>
    <property type="match status" value="1"/>
</dbReference>
<dbReference type="FunFam" id="1.10.287.10:FF:000002">
    <property type="entry name" value="30S ribosomal protein S15"/>
    <property type="match status" value="1"/>
</dbReference>
<dbReference type="Gene3D" id="6.10.250.3130">
    <property type="match status" value="1"/>
</dbReference>
<dbReference type="Gene3D" id="1.10.287.10">
    <property type="entry name" value="S15/NS1, RNA-binding"/>
    <property type="match status" value="1"/>
</dbReference>
<dbReference type="HAMAP" id="MF_01343_B">
    <property type="entry name" value="Ribosomal_uS15_B"/>
    <property type="match status" value="1"/>
</dbReference>
<dbReference type="InterPro" id="IPR000589">
    <property type="entry name" value="Ribosomal_uS15"/>
</dbReference>
<dbReference type="InterPro" id="IPR005290">
    <property type="entry name" value="Ribosomal_uS15_bac-type"/>
</dbReference>
<dbReference type="InterPro" id="IPR009068">
    <property type="entry name" value="uS15_NS1_RNA-bd_sf"/>
</dbReference>
<dbReference type="NCBIfam" id="TIGR00952">
    <property type="entry name" value="S15_bact"/>
    <property type="match status" value="1"/>
</dbReference>
<dbReference type="PANTHER" id="PTHR23321">
    <property type="entry name" value="RIBOSOMAL PROTEIN S15, BACTERIAL AND ORGANELLAR"/>
    <property type="match status" value="1"/>
</dbReference>
<dbReference type="PANTHER" id="PTHR23321:SF26">
    <property type="entry name" value="SMALL RIBOSOMAL SUBUNIT PROTEIN US15M"/>
    <property type="match status" value="1"/>
</dbReference>
<dbReference type="Pfam" id="PF00312">
    <property type="entry name" value="Ribosomal_S15"/>
    <property type="match status" value="1"/>
</dbReference>
<dbReference type="SMART" id="SM01387">
    <property type="entry name" value="Ribosomal_S15"/>
    <property type="match status" value="1"/>
</dbReference>
<dbReference type="SUPFAM" id="SSF47060">
    <property type="entry name" value="S15/NS1 RNA-binding domain"/>
    <property type="match status" value="1"/>
</dbReference>
<dbReference type="PROSITE" id="PS00362">
    <property type="entry name" value="RIBOSOMAL_S15"/>
    <property type="match status" value="1"/>
</dbReference>
<reference key="1">
    <citation type="journal article" date="2006" name="Proc. Natl. Acad. Sci. U.S.A.">
        <title>Evolution of sensory complexity recorded in a myxobacterial genome.</title>
        <authorList>
            <person name="Goldman B.S."/>
            <person name="Nierman W.C."/>
            <person name="Kaiser D."/>
            <person name="Slater S.C."/>
            <person name="Durkin A.S."/>
            <person name="Eisen J.A."/>
            <person name="Ronning C.M."/>
            <person name="Barbazuk W.B."/>
            <person name="Blanchard M."/>
            <person name="Field C."/>
            <person name="Halling C."/>
            <person name="Hinkle G."/>
            <person name="Iartchuk O."/>
            <person name="Kim H.S."/>
            <person name="Mackenzie C."/>
            <person name="Madupu R."/>
            <person name="Miller N."/>
            <person name="Shvartsbeyn A."/>
            <person name="Sullivan S.A."/>
            <person name="Vaudin M."/>
            <person name="Wiegand R."/>
            <person name="Kaplan H.B."/>
        </authorList>
    </citation>
    <scope>NUCLEOTIDE SEQUENCE [LARGE SCALE GENOMIC DNA]</scope>
    <source>
        <strain>DK1622</strain>
    </source>
</reference>
<keyword id="KW-1185">Reference proteome</keyword>
<keyword id="KW-0687">Ribonucleoprotein</keyword>
<keyword id="KW-0689">Ribosomal protein</keyword>
<keyword id="KW-0694">RNA-binding</keyword>
<keyword id="KW-0699">rRNA-binding</keyword>